<organism>
    <name type="scientific">Arabidopsis thaliana</name>
    <name type="common">Mouse-ear cress</name>
    <dbReference type="NCBI Taxonomy" id="3702"/>
    <lineage>
        <taxon>Eukaryota</taxon>
        <taxon>Viridiplantae</taxon>
        <taxon>Streptophyta</taxon>
        <taxon>Embryophyta</taxon>
        <taxon>Tracheophyta</taxon>
        <taxon>Spermatophyta</taxon>
        <taxon>Magnoliopsida</taxon>
        <taxon>eudicotyledons</taxon>
        <taxon>Gunneridae</taxon>
        <taxon>Pentapetalae</taxon>
        <taxon>rosids</taxon>
        <taxon>malvids</taxon>
        <taxon>Brassicales</taxon>
        <taxon>Brassicaceae</taxon>
        <taxon>Camelineae</taxon>
        <taxon>Arabidopsis</taxon>
    </lineage>
</organism>
<proteinExistence type="evidence at protein level"/>
<sequence length="435" mass="48877">MDQEIEIPSFFLCPISLDIMKDPVIVSTGITYDRESIEKWLFSGKKNSCPVTKQVITETDLTPNHTLRRLIQSWCTLNASYGIERIPTPKPPICKSEIEKLIKESSSSHLNQVKCLKRLRQIVSENTTNKRCLEAAEVPEFLANIVSNSVDTYNSPSSSLSSSNLNDMCQSNMLENRFDSSRSLMDEALSVLYHLDTSETALKSLLNNKKGTNLVKTLTKIMQRGIYESRAYAALLLKKLLEVADPMQIILLERELFGEVIQILHDQISHKATRSAMQILVITCPWGRNRHKAVEGGTISMIIELLMDDTFSSERRNSEMAMVVLDMLCQCAEGRAEFLNHGAAIAVVSKKILRVSQITSERAVRVLLSVGRFCATPSLLQEMLQLGVVAKLCLVLQVSCGNKTKEKAKELLKLHARVWRESPCVPRNLYDSYPA</sequence>
<keyword id="KW-0963">Cytoplasm</keyword>
<keyword id="KW-0611">Plant defense</keyword>
<keyword id="KW-1185">Reference proteome</keyword>
<keyword id="KW-0808">Transferase</keyword>
<keyword id="KW-0832">Ubl conjugation</keyword>
<keyword id="KW-0833">Ubl conjugation pathway</keyword>
<accession>Q9SVC6</accession>
<feature type="chain" id="PRO_0000322166" description="E3 ubiquitin-protein ligase PUB22">
    <location>
        <begin position="1"/>
        <end position="435"/>
    </location>
</feature>
<feature type="domain" description="U-box" evidence="1">
    <location>
        <begin position="6"/>
        <end position="81"/>
    </location>
</feature>
<feature type="mutagenesis site" description="Loss of autoubiquitination and increased accumulation (at protein level). Increased levels of EXO70B2 (at protein level)." evidence="3 4">
    <original>C</original>
    <variation>A</variation>
    <location>
        <position position="13"/>
    </location>
</feature>
<feature type="mutagenesis site" description="Loss of autoubiquitination." evidence="3">
    <original>W</original>
    <variation>A</variation>
    <location>
        <position position="40"/>
    </location>
</feature>
<dbReference type="EC" id="2.3.2.27" evidence="2 3 4"/>
<dbReference type="EMBL" id="AL050300">
    <property type="protein sequence ID" value="CAB43434.1"/>
    <property type="molecule type" value="Genomic_DNA"/>
</dbReference>
<dbReference type="EMBL" id="CP002686">
    <property type="protein sequence ID" value="AEE78947.1"/>
    <property type="molecule type" value="Genomic_DNA"/>
</dbReference>
<dbReference type="EMBL" id="BT015763">
    <property type="protein sequence ID" value="AAU90053.1"/>
    <property type="molecule type" value="mRNA"/>
</dbReference>
<dbReference type="EMBL" id="BT020203">
    <property type="protein sequence ID" value="AAV59269.1"/>
    <property type="molecule type" value="mRNA"/>
</dbReference>
<dbReference type="EMBL" id="AK228993">
    <property type="protein sequence ID" value="BAF00881.1"/>
    <property type="molecule type" value="mRNA"/>
</dbReference>
<dbReference type="PIR" id="T08454">
    <property type="entry name" value="T08454"/>
</dbReference>
<dbReference type="RefSeq" id="NP_190813.1">
    <property type="nucleotide sequence ID" value="NM_115105.4"/>
</dbReference>
<dbReference type="SMR" id="Q9SVC6"/>
<dbReference type="BioGRID" id="9728">
    <property type="interactions" value="13"/>
</dbReference>
<dbReference type="FunCoup" id="Q9SVC6">
    <property type="interactions" value="46"/>
</dbReference>
<dbReference type="STRING" id="3702.Q9SVC6"/>
<dbReference type="GlyGen" id="Q9SVC6">
    <property type="glycosylation" value="1 site"/>
</dbReference>
<dbReference type="PaxDb" id="3702-AT3G52450.1"/>
<dbReference type="EnsemblPlants" id="AT3G52450.1">
    <property type="protein sequence ID" value="AT3G52450.1"/>
    <property type="gene ID" value="AT3G52450"/>
</dbReference>
<dbReference type="GeneID" id="824410"/>
<dbReference type="Gramene" id="AT3G52450.1">
    <property type="protein sequence ID" value="AT3G52450.1"/>
    <property type="gene ID" value="AT3G52450"/>
</dbReference>
<dbReference type="KEGG" id="ath:AT3G52450"/>
<dbReference type="Araport" id="AT3G52450"/>
<dbReference type="TAIR" id="AT3G52450">
    <property type="gene designation" value="PUB22"/>
</dbReference>
<dbReference type="eggNOG" id="ENOG502QR1A">
    <property type="taxonomic scope" value="Eukaryota"/>
</dbReference>
<dbReference type="HOGENOM" id="CLU_006348_1_0_1"/>
<dbReference type="InParanoid" id="Q9SVC6"/>
<dbReference type="OMA" id="AWCTMNA"/>
<dbReference type="PhylomeDB" id="Q9SVC6"/>
<dbReference type="UniPathway" id="UPA00143"/>
<dbReference type="PRO" id="PR:Q9SVC6"/>
<dbReference type="Proteomes" id="UP000006548">
    <property type="component" value="Chromosome 3"/>
</dbReference>
<dbReference type="ExpressionAtlas" id="Q9SVC6">
    <property type="expression patterns" value="baseline and differential"/>
</dbReference>
<dbReference type="GO" id="GO:0005829">
    <property type="term" value="C:cytosol"/>
    <property type="evidence" value="ECO:0000314"/>
    <property type="project" value="TAIR"/>
</dbReference>
<dbReference type="GO" id="GO:0061630">
    <property type="term" value="F:ubiquitin protein ligase activity"/>
    <property type="evidence" value="ECO:0007669"/>
    <property type="project" value="InterPro"/>
</dbReference>
<dbReference type="GO" id="GO:0004842">
    <property type="term" value="F:ubiquitin-protein transferase activity"/>
    <property type="evidence" value="ECO:0000314"/>
    <property type="project" value="UniProtKB"/>
</dbReference>
<dbReference type="GO" id="GO:0006952">
    <property type="term" value="P:defense response"/>
    <property type="evidence" value="ECO:0000316"/>
    <property type="project" value="TAIR"/>
</dbReference>
<dbReference type="GO" id="GO:0051865">
    <property type="term" value="P:protein autoubiquitination"/>
    <property type="evidence" value="ECO:0000314"/>
    <property type="project" value="TAIR"/>
</dbReference>
<dbReference type="GO" id="GO:0016567">
    <property type="term" value="P:protein ubiquitination"/>
    <property type="evidence" value="ECO:0000314"/>
    <property type="project" value="TAIR"/>
</dbReference>
<dbReference type="GO" id="GO:0002679">
    <property type="term" value="P:respiratory burst involved in defense response"/>
    <property type="evidence" value="ECO:0000316"/>
    <property type="project" value="TAIR"/>
</dbReference>
<dbReference type="GO" id="GO:0009414">
    <property type="term" value="P:response to water deprivation"/>
    <property type="evidence" value="ECO:0000315"/>
    <property type="project" value="TAIR"/>
</dbReference>
<dbReference type="CDD" id="cd16664">
    <property type="entry name" value="RING-Ubox_PUB"/>
    <property type="match status" value="1"/>
</dbReference>
<dbReference type="FunFam" id="1.25.10.10:FF:000529">
    <property type="entry name" value="RING-type E3 ubiquitin transferase"/>
    <property type="match status" value="1"/>
</dbReference>
<dbReference type="FunFam" id="3.30.40.10:FF:000437">
    <property type="entry name" value="RING-type E3 ubiquitin transferase"/>
    <property type="match status" value="1"/>
</dbReference>
<dbReference type="Gene3D" id="1.25.10.10">
    <property type="entry name" value="Leucine-rich Repeat Variant"/>
    <property type="match status" value="1"/>
</dbReference>
<dbReference type="Gene3D" id="3.30.40.10">
    <property type="entry name" value="Zinc/RING finger domain, C3HC4 (zinc finger)"/>
    <property type="match status" value="1"/>
</dbReference>
<dbReference type="InterPro" id="IPR011989">
    <property type="entry name" value="ARM-like"/>
</dbReference>
<dbReference type="InterPro" id="IPR016024">
    <property type="entry name" value="ARM-type_fold"/>
</dbReference>
<dbReference type="InterPro" id="IPR045185">
    <property type="entry name" value="PUB22/23/24-like"/>
</dbReference>
<dbReference type="InterPro" id="IPR045210">
    <property type="entry name" value="RING-Ubox_PUB"/>
</dbReference>
<dbReference type="InterPro" id="IPR003613">
    <property type="entry name" value="Ubox_domain"/>
</dbReference>
<dbReference type="InterPro" id="IPR013083">
    <property type="entry name" value="Znf_RING/FYVE/PHD"/>
</dbReference>
<dbReference type="PANTHER" id="PTHR22849:SF146">
    <property type="entry name" value="E3 UBIQUITIN-PROTEIN LIGASE PUB22"/>
    <property type="match status" value="1"/>
</dbReference>
<dbReference type="PANTHER" id="PTHR22849">
    <property type="entry name" value="WDSAM1 PROTEIN"/>
    <property type="match status" value="1"/>
</dbReference>
<dbReference type="Pfam" id="PF04564">
    <property type="entry name" value="U-box"/>
    <property type="match status" value="1"/>
</dbReference>
<dbReference type="SMART" id="SM00504">
    <property type="entry name" value="Ubox"/>
    <property type="match status" value="1"/>
</dbReference>
<dbReference type="SUPFAM" id="SSF48371">
    <property type="entry name" value="ARM repeat"/>
    <property type="match status" value="1"/>
</dbReference>
<dbReference type="SUPFAM" id="SSF57850">
    <property type="entry name" value="RING/U-box"/>
    <property type="match status" value="1"/>
</dbReference>
<dbReference type="PROSITE" id="PS51698">
    <property type="entry name" value="U_BOX"/>
    <property type="match status" value="1"/>
</dbReference>
<name>PUB22_ARATH</name>
<evidence type="ECO:0000255" key="1">
    <source>
        <dbReference type="PROSITE-ProRule" id="PRU01034"/>
    </source>
</evidence>
<evidence type="ECO:0000269" key="2">
    <source>
    </source>
</evidence>
<evidence type="ECO:0000269" key="3">
    <source>
    </source>
</evidence>
<evidence type="ECO:0000269" key="4">
    <source>
    </source>
</evidence>
<evidence type="ECO:0000303" key="5">
    <source>
    </source>
</evidence>
<evidence type="ECO:0000312" key="6">
    <source>
        <dbReference type="Araport" id="AT3G52450"/>
    </source>
</evidence>
<evidence type="ECO:0000312" key="7">
    <source>
        <dbReference type="EMBL" id="CAB43434.1"/>
    </source>
</evidence>
<gene>
    <name evidence="5" type="primary">PUB22</name>
    <name evidence="6" type="ordered locus">At3g52450</name>
    <name evidence="7" type="ORF">F22O6.170</name>
</gene>
<reference key="1">
    <citation type="journal article" date="2000" name="Nature">
        <title>Sequence and analysis of chromosome 3 of the plant Arabidopsis thaliana.</title>
        <authorList>
            <person name="Salanoubat M."/>
            <person name="Lemcke K."/>
            <person name="Rieger M."/>
            <person name="Ansorge W."/>
            <person name="Unseld M."/>
            <person name="Fartmann B."/>
            <person name="Valle G."/>
            <person name="Bloecker H."/>
            <person name="Perez-Alonso M."/>
            <person name="Obermaier B."/>
            <person name="Delseny M."/>
            <person name="Boutry M."/>
            <person name="Grivell L.A."/>
            <person name="Mache R."/>
            <person name="Puigdomenech P."/>
            <person name="De Simone V."/>
            <person name="Choisne N."/>
            <person name="Artiguenave F."/>
            <person name="Robert C."/>
            <person name="Brottier P."/>
            <person name="Wincker P."/>
            <person name="Cattolico L."/>
            <person name="Weissenbach J."/>
            <person name="Saurin W."/>
            <person name="Quetier F."/>
            <person name="Schaefer M."/>
            <person name="Mueller-Auer S."/>
            <person name="Gabel C."/>
            <person name="Fuchs M."/>
            <person name="Benes V."/>
            <person name="Wurmbach E."/>
            <person name="Drzonek H."/>
            <person name="Erfle H."/>
            <person name="Jordan N."/>
            <person name="Bangert S."/>
            <person name="Wiedelmann R."/>
            <person name="Kranz H."/>
            <person name="Voss H."/>
            <person name="Holland R."/>
            <person name="Brandt P."/>
            <person name="Nyakatura G."/>
            <person name="Vezzi A."/>
            <person name="D'Angelo M."/>
            <person name="Pallavicini A."/>
            <person name="Toppo S."/>
            <person name="Simionati B."/>
            <person name="Conrad A."/>
            <person name="Hornischer K."/>
            <person name="Kauer G."/>
            <person name="Loehnert T.-H."/>
            <person name="Nordsiek G."/>
            <person name="Reichelt J."/>
            <person name="Scharfe M."/>
            <person name="Schoen O."/>
            <person name="Bargues M."/>
            <person name="Terol J."/>
            <person name="Climent J."/>
            <person name="Navarro P."/>
            <person name="Collado C."/>
            <person name="Perez-Perez A."/>
            <person name="Ottenwaelder B."/>
            <person name="Duchemin D."/>
            <person name="Cooke R."/>
            <person name="Laudie M."/>
            <person name="Berger-Llauro C."/>
            <person name="Purnelle B."/>
            <person name="Masuy D."/>
            <person name="de Haan M."/>
            <person name="Maarse A.C."/>
            <person name="Alcaraz J.-P."/>
            <person name="Cottet A."/>
            <person name="Casacuberta E."/>
            <person name="Monfort A."/>
            <person name="Argiriou A."/>
            <person name="Flores M."/>
            <person name="Liguori R."/>
            <person name="Vitale D."/>
            <person name="Mannhaupt G."/>
            <person name="Haase D."/>
            <person name="Schoof H."/>
            <person name="Rudd S."/>
            <person name="Zaccaria P."/>
            <person name="Mewes H.-W."/>
            <person name="Mayer K.F.X."/>
            <person name="Kaul S."/>
            <person name="Town C.D."/>
            <person name="Koo H.L."/>
            <person name="Tallon L.J."/>
            <person name="Jenkins J."/>
            <person name="Rooney T."/>
            <person name="Rizzo M."/>
            <person name="Walts A."/>
            <person name="Utterback T."/>
            <person name="Fujii C.Y."/>
            <person name="Shea T.P."/>
            <person name="Creasy T.H."/>
            <person name="Haas B."/>
            <person name="Maiti R."/>
            <person name="Wu D."/>
            <person name="Peterson J."/>
            <person name="Van Aken S."/>
            <person name="Pai G."/>
            <person name="Militscher J."/>
            <person name="Sellers P."/>
            <person name="Gill J.E."/>
            <person name="Feldblyum T.V."/>
            <person name="Preuss D."/>
            <person name="Lin X."/>
            <person name="Nierman W.C."/>
            <person name="Salzberg S.L."/>
            <person name="White O."/>
            <person name="Venter J.C."/>
            <person name="Fraser C.M."/>
            <person name="Kaneko T."/>
            <person name="Nakamura Y."/>
            <person name="Sato S."/>
            <person name="Kato T."/>
            <person name="Asamizu E."/>
            <person name="Sasamoto S."/>
            <person name="Kimura T."/>
            <person name="Idesawa K."/>
            <person name="Kawashima K."/>
            <person name="Kishida Y."/>
            <person name="Kiyokawa C."/>
            <person name="Kohara M."/>
            <person name="Matsumoto M."/>
            <person name="Matsuno A."/>
            <person name="Muraki A."/>
            <person name="Nakayama S."/>
            <person name="Nakazaki N."/>
            <person name="Shinpo S."/>
            <person name="Takeuchi C."/>
            <person name="Wada T."/>
            <person name="Watanabe A."/>
            <person name="Yamada M."/>
            <person name="Yasuda M."/>
            <person name="Tabata S."/>
        </authorList>
    </citation>
    <scope>NUCLEOTIDE SEQUENCE [LARGE SCALE GENOMIC DNA]</scope>
    <source>
        <strain>cv. Columbia</strain>
    </source>
</reference>
<reference key="2">
    <citation type="journal article" date="2017" name="Plant J.">
        <title>Araport11: a complete reannotation of the Arabidopsis thaliana reference genome.</title>
        <authorList>
            <person name="Cheng C.Y."/>
            <person name="Krishnakumar V."/>
            <person name="Chan A.P."/>
            <person name="Thibaud-Nissen F."/>
            <person name="Schobel S."/>
            <person name="Town C.D."/>
        </authorList>
    </citation>
    <scope>GENOME REANNOTATION</scope>
    <source>
        <strain>cv. Columbia</strain>
    </source>
</reference>
<reference key="3">
    <citation type="submission" date="2004-11" db="EMBL/GenBank/DDBJ databases">
        <title>Arabidopsis ORF clones.</title>
        <authorList>
            <person name="Shinn P."/>
            <person name="Chen H."/>
            <person name="Cheuk R.F."/>
            <person name="Kim C.J."/>
            <person name="Ecker J.R."/>
        </authorList>
    </citation>
    <scope>NUCLEOTIDE SEQUENCE [LARGE SCALE MRNA]</scope>
    <source>
        <strain>cv. Columbia</strain>
    </source>
</reference>
<reference key="4">
    <citation type="submission" date="2006-07" db="EMBL/GenBank/DDBJ databases">
        <title>Large-scale analysis of RIKEN Arabidopsis full-length (RAFL) cDNAs.</title>
        <authorList>
            <person name="Totoki Y."/>
            <person name="Seki M."/>
            <person name="Ishida J."/>
            <person name="Nakajima M."/>
            <person name="Enju A."/>
            <person name="Kamiya A."/>
            <person name="Narusaka M."/>
            <person name="Shin-i T."/>
            <person name="Nakagawa M."/>
            <person name="Sakamoto N."/>
            <person name="Oishi K."/>
            <person name="Kohara Y."/>
            <person name="Kobayashi M."/>
            <person name="Toyoda A."/>
            <person name="Sakaki Y."/>
            <person name="Sakurai T."/>
            <person name="Iida K."/>
            <person name="Akiyama K."/>
            <person name="Satou M."/>
            <person name="Toyoda T."/>
            <person name="Konagaya A."/>
            <person name="Carninci P."/>
            <person name="Kawai J."/>
            <person name="Hayashizaki Y."/>
            <person name="Shinozaki K."/>
        </authorList>
    </citation>
    <scope>NUCLEOTIDE SEQUENCE [LARGE SCALE MRNA]</scope>
    <source>
        <strain>cv. Columbia</strain>
    </source>
</reference>
<reference key="5">
    <citation type="journal article" date="2001" name="Trends Plant Sci.">
        <title>The U-box protein family in plants.</title>
        <authorList>
            <person name="Azevedo C."/>
            <person name="Santos-Rosa M.J."/>
            <person name="Shirasu K."/>
        </authorList>
    </citation>
    <scope>GENE FAMILY ORGANIZATION</scope>
    <scope>NOMENCLATURE</scope>
</reference>
<reference key="6">
    <citation type="journal article" date="2004" name="Plant Physiol.">
        <title>A large complement of the predicted Arabidopsis ARM repeat proteins are members of the U-box E3 ubiquitin ligase family.</title>
        <authorList>
            <person name="Mudgil Y."/>
            <person name="Shiu S.-H."/>
            <person name="Stone S.L."/>
            <person name="Salt J.N."/>
            <person name="Goring D.R."/>
        </authorList>
    </citation>
    <scope>GENE FAMILY ORGANIZATION</scope>
</reference>
<reference key="7">
    <citation type="journal article" date="2008" name="Curr. Biol.">
        <title>Negative regulation of PAMP-triggered immunity by an E3 ubiquitin ligase triplet in Arabidopsis.</title>
        <authorList>
            <person name="Trujillo M."/>
            <person name="Ichimura K."/>
            <person name="Casais C."/>
            <person name="Shirasu K."/>
        </authorList>
    </citation>
    <scope>FUNCTION</scope>
    <scope>AUTOUBIQUITINATION</scope>
    <scope>INDUCTION</scope>
    <scope>MUTAGENESIS OF CYS-13 AND TRP-40</scope>
    <scope>CATALYTIC ACTIVITY</scope>
</reference>
<reference key="8">
    <citation type="journal article" date="2008" name="Plant Cell">
        <title>Arabidopsis PUB22 and PUB23 are homologous U-Box E3 ubiquitin ligases that play combinatory roles in response to drought stress.</title>
        <authorList>
            <person name="Cho S.K."/>
            <person name="Ryu M.Y."/>
            <person name="Song C."/>
            <person name="Kwak J.M."/>
            <person name="Kim W.T."/>
        </authorList>
    </citation>
    <scope>FUNCTION</scope>
    <scope>INTERACTION WITH RPN12A</scope>
    <scope>SUBCELLULAR LOCATION</scope>
    <scope>INDUCTION</scope>
    <scope>AUTOUBIQUITINATION</scope>
    <scope>DISRUPTION PHENOTYPE</scope>
    <scope>CATALYTIC ACTIVITY</scope>
</reference>
<reference key="9">
    <citation type="journal article" date="2012" name="Plant Cell">
        <title>The ubiquitin ligase PUB22 targets a subunit of the exocyst complex required for PAMP-triggered responses in Arabidopsis.</title>
        <authorList>
            <person name="Stegmann M."/>
            <person name="Anderson R.G."/>
            <person name="Ichimura K."/>
            <person name="Pecenkova T."/>
            <person name="Reuter P."/>
            <person name="Zarsky V."/>
            <person name="McDowell J.M."/>
            <person name="Shirasu K."/>
            <person name="Trujillo M."/>
        </authorList>
    </citation>
    <scope>FUNCTION</scope>
    <scope>MUTAGENESIS OF CYS-13</scope>
    <scope>INTERACTION WITH EXO70B2</scope>
    <scope>AUTO-UBIQUITINATION</scope>
    <scope>CATALYTIC ACTIVITY</scope>
    <source>
        <strain>cv. Columbia</strain>
    </source>
</reference>
<comment type="function">
    <text evidence="2 3 4">E3 ubiquitin-protein ligase that negatively regulates water stress response. May control in coordination with PUB23 a drought signaling pathway by ubiquitinating cytosolic RPN12a. Acts as a negative regulator of the immunity triggered by the pathogen-associated molecular patterns (PAMPs), in association with PUB23 and PUB24. Regulates EXO70B2 ubiquitination and degradation via the 26S proteasome to attenuate PAMP-induced signaling (PubMed:23170036).</text>
</comment>
<comment type="catalytic activity">
    <reaction evidence="2 3 4">
        <text>S-ubiquitinyl-[E2 ubiquitin-conjugating enzyme]-L-cysteine + [acceptor protein]-L-lysine = [E2 ubiquitin-conjugating enzyme]-L-cysteine + N(6)-ubiquitinyl-[acceptor protein]-L-lysine.</text>
        <dbReference type="EC" id="2.3.2.27"/>
    </reaction>
</comment>
<comment type="pathway">
    <text evidence="2 3 4">Protein modification; protein ubiquitination.</text>
</comment>
<comment type="subunit">
    <text evidence="2 4">Interacts with RPN12A (PubMed:18664614). Binds to EXO70B2 (PubMed:23170036).</text>
</comment>
<comment type="subcellular location">
    <subcellularLocation>
        <location evidence="2">Cytoplasm</location>
    </subcellularLocation>
</comment>
<comment type="induction">
    <text evidence="2 3">By cold, drought and salt stresses, bacterial elicitor flg22, and bacterial and oomycete pathogens.</text>
</comment>
<comment type="PTM">
    <text evidence="2 3 4">Auto-ubiquitinated leading to degradation via the 26S proteasome. This Auto-ubiquitination is repressed by the bacterial elicitor flg22 thus leading to a transiently increased protein stabilization and accumulation.</text>
</comment>
<comment type="disruption phenotype">
    <text evidence="2">Increased tolerance to drought stress.</text>
</comment>
<protein>
    <recommendedName>
        <fullName evidence="5">E3 ubiquitin-protein ligase PUB22</fullName>
        <ecNumber evidence="2 3 4">2.3.2.27</ecNumber>
    </recommendedName>
    <alternativeName>
        <fullName evidence="5">Plant U-box protein 22</fullName>
    </alternativeName>
    <alternativeName>
        <fullName evidence="5">RING-type E3 ubiquitin transferase PUB22</fullName>
    </alternativeName>
    <alternativeName>
        <fullName evidence="5">U-box domain-containing protein 22</fullName>
    </alternativeName>
</protein>